<protein>
    <recommendedName>
        <fullName>Ephrin type-A receptor 7</fullName>
        <ecNumber>2.7.10.1</ecNumber>
    </recommendedName>
    <alternativeName>
        <fullName>Developmental kinase 1</fullName>
        <shortName>mDK-1</shortName>
    </alternativeName>
    <alternativeName>
        <fullName>EPH homology kinase 3</fullName>
        <shortName>EHK-3</shortName>
    </alternativeName>
    <alternativeName>
        <fullName>Embryonic brain kinase</fullName>
        <shortName>EBK</shortName>
    </alternativeName>
</protein>
<feature type="signal peptide" evidence="2">
    <location>
        <begin position="1"/>
        <end position="27"/>
    </location>
</feature>
<feature type="chain" id="PRO_0000016819" description="Ephrin type-A receptor 7">
    <location>
        <begin position="28"/>
        <end position="998"/>
    </location>
</feature>
<feature type="topological domain" description="Extracellular" evidence="2">
    <location>
        <begin position="28"/>
        <end position="555"/>
    </location>
</feature>
<feature type="transmembrane region" description="Helical" evidence="2">
    <location>
        <begin position="556"/>
        <end position="576"/>
    </location>
</feature>
<feature type="topological domain" description="Cytoplasmic" evidence="2">
    <location>
        <begin position="577"/>
        <end position="998"/>
    </location>
</feature>
<feature type="domain" description="Eph LBD" evidence="6">
    <location>
        <begin position="32"/>
        <end position="210"/>
    </location>
</feature>
<feature type="domain" description="Fibronectin type-III 1" evidence="5">
    <location>
        <begin position="331"/>
        <end position="441"/>
    </location>
</feature>
<feature type="domain" description="Fibronectin type-III 2" evidence="5">
    <location>
        <begin position="442"/>
        <end position="537"/>
    </location>
</feature>
<feature type="domain" description="Protein kinase" evidence="3">
    <location>
        <begin position="633"/>
        <end position="894"/>
    </location>
</feature>
<feature type="domain" description="SAM" evidence="4">
    <location>
        <begin position="923"/>
        <end position="987"/>
    </location>
</feature>
<feature type="short sequence motif" description="PDZ-binding" evidence="2">
    <location>
        <begin position="996"/>
        <end position="998"/>
    </location>
</feature>
<feature type="active site" description="Proton acceptor" evidence="3 7">
    <location>
        <position position="758"/>
    </location>
</feature>
<feature type="binding site" evidence="3">
    <location>
        <begin position="639"/>
        <end position="647"/>
    </location>
    <ligand>
        <name>ATP</name>
        <dbReference type="ChEBI" id="CHEBI:30616"/>
    </ligand>
</feature>
<feature type="binding site" evidence="3">
    <location>
        <position position="665"/>
    </location>
    <ligand>
        <name>ATP</name>
        <dbReference type="ChEBI" id="CHEBI:30616"/>
    </ligand>
</feature>
<feature type="modified residue" description="Phosphotyrosine; by autocatalysis" evidence="2">
    <location>
        <position position="608"/>
    </location>
</feature>
<feature type="modified residue" description="Phosphotyrosine; by autocatalysis" evidence="2">
    <location>
        <position position="614"/>
    </location>
</feature>
<feature type="modified residue" description="Phosphotyrosine; by autocatalysis" evidence="1">
    <location>
        <position position="791"/>
    </location>
</feature>
<feature type="modified residue" description="Phosphotyrosine; by autocatalysis" evidence="2">
    <location>
        <position position="940"/>
    </location>
</feature>
<feature type="glycosylation site" description="N-linked (GlcNAc...) asparagine" evidence="2">
    <location>
        <position position="343"/>
    </location>
</feature>
<feature type="glycosylation site" description="N-linked (GlcNAc...) asparagine" evidence="2">
    <location>
        <position position="410"/>
    </location>
</feature>
<feature type="splice variant" id="VSP_003006" description="In isoform 2." evidence="14">
    <location>
        <begin position="540"/>
        <end position="544"/>
    </location>
</feature>
<feature type="splice variant" id="VSP_003010" description="In isoform 5." evidence="15">
    <original>FKFPGTKTYIDPETYEDPNRAVHQFAK</original>
    <variation>SLYRERGDGMEKTQHNKKWMIASCSRL</variation>
    <location>
        <begin position="600"/>
        <end position="626"/>
    </location>
</feature>
<feature type="splice variant" id="VSP_003008" description="In isoform 4." evidence="15">
    <original>FKFPGTKTYID</original>
    <variation>SLVTNEHLSVL</variation>
    <location>
        <begin position="600"/>
        <end position="610"/>
    </location>
</feature>
<feature type="splice variant" id="VSP_003007" description="In isoform 3." evidence="15">
    <location>
        <begin position="601"/>
        <end position="604"/>
    </location>
</feature>
<feature type="splice variant" id="VSP_003009" description="In isoform 4." evidence="15">
    <location>
        <begin position="611"/>
        <end position="998"/>
    </location>
</feature>
<feature type="splice variant" id="VSP_003011" description="In isoform 5." evidence="15">
    <location>
        <begin position="627"/>
        <end position="998"/>
    </location>
</feature>
<feature type="sequence conflict" description="In Ref. 1; CAA55687/CAA55688/CAA55689." evidence="15" ref="1">
    <original>S</original>
    <variation>T</variation>
    <location>
        <position position="207"/>
    </location>
</feature>
<feature type="sequence conflict" description="In Ref. 6; CAA57224." evidence="15" ref="6">
    <original>Y</original>
    <variation>H</variation>
    <location>
        <position position="480"/>
    </location>
</feature>
<feature type="sequence conflict" description="In Ref. 1; CAA55687." evidence="15" ref="1">
    <original>K</original>
    <variation>Q</variation>
    <location>
        <position position="657"/>
    </location>
</feature>
<keyword id="KW-0025">Alternative splicing</keyword>
<keyword id="KW-0053">Apoptosis</keyword>
<keyword id="KW-0067">ATP-binding</keyword>
<keyword id="KW-1003">Cell membrane</keyword>
<keyword id="KW-0217">Developmental protein</keyword>
<keyword id="KW-0325">Glycoprotein</keyword>
<keyword id="KW-0418">Kinase</keyword>
<keyword id="KW-0472">Membrane</keyword>
<keyword id="KW-0524">Neurogenesis</keyword>
<keyword id="KW-0547">Nucleotide-binding</keyword>
<keyword id="KW-0597">Phosphoprotein</keyword>
<keyword id="KW-0675">Receptor</keyword>
<keyword id="KW-1185">Reference proteome</keyword>
<keyword id="KW-0677">Repeat</keyword>
<keyword id="KW-0732">Signal</keyword>
<keyword id="KW-0808">Transferase</keyword>
<keyword id="KW-0812">Transmembrane</keyword>
<keyword id="KW-1133">Transmembrane helix</keyword>
<keyword id="KW-0829">Tyrosine-protein kinase</keyword>
<comment type="function">
    <text evidence="9 10 11">Receptor tyrosine kinase which binds promiscuously GPI-anchored ephrin-A family ligands residing on adjacent cells, leading to contact-dependent bidirectional signaling into neighboring cells. The signaling pathway downstream of the receptor is referred to as forward signaling while the signaling pathway downstream of the ephrin ligand is referred to as reverse signaling. Among GPI-anchored ephrin-A ligands, EFNA5 is a cognate/functional ligand for EPHA7 and their interaction regulates brain development modulating cell-cell adhesion and repulsion. Has a repellent activity on axons and is for instance involved in the guidance of corticothalamic axons and in the proper topographic mapping of retinal axons to the colliculus. May also regulate brain development through a caspase(CASP3)-dependent proapoptotic activity. Forward signaling may result in activation of components of the ERK signaling pathway including MAP2K1, MAP2K2, MAPK1 and MAPK3 which are phosphorylated upon activation of EPHA7. Isoform 4 which lacks the kinase domain may regulate isoform 1 adhesive properties.</text>
</comment>
<comment type="catalytic activity">
    <reaction evidence="7">
        <text>L-tyrosyl-[protein] + ATP = O-phospho-L-tyrosyl-[protein] + ADP + H(+)</text>
        <dbReference type="Rhea" id="RHEA:10596"/>
        <dbReference type="Rhea" id="RHEA-COMP:10136"/>
        <dbReference type="Rhea" id="RHEA-COMP:20101"/>
        <dbReference type="ChEBI" id="CHEBI:15378"/>
        <dbReference type="ChEBI" id="CHEBI:30616"/>
        <dbReference type="ChEBI" id="CHEBI:46858"/>
        <dbReference type="ChEBI" id="CHEBI:61978"/>
        <dbReference type="ChEBI" id="CHEBI:456216"/>
        <dbReference type="EC" id="2.7.10.1"/>
    </reaction>
</comment>
<comment type="subunit">
    <text evidence="1 13">Heterotetramer upon binding of the ligand. The heterotetramer is composed of an ephrin dimer and a receptor dimer. Oligomerization is probably required to induce biological responses (By similarity). Interacts (via PDZ-binding motif) with GRIP1 and PICK1 (via PDZ domain).</text>
</comment>
<comment type="subcellular location">
    <subcellularLocation>
        <location evidence="16">Cell membrane</location>
        <topology evidence="16">Single-pass type I membrane protein</topology>
    </subcellularLocation>
</comment>
<comment type="alternative products">
    <event type="alternative splicing"/>
    <isoform>
        <id>Q61772-1</id>
        <name>1</name>
        <name>MDK1</name>
        <name>EPHA7-FL</name>
        <sequence type="displayed"/>
    </isoform>
    <isoform>
        <id>Q61772-2</id>
        <name>2</name>
        <name>MDK1-1</name>
        <name>Ebk-td1</name>
        <sequence type="described" ref="VSP_003006"/>
    </isoform>
    <isoform>
        <id>Q61772-3</id>
        <name>3</name>
        <name>MDK1-2</name>
        <sequence type="described" ref="VSP_003007"/>
    </isoform>
    <isoform>
        <id>Q61772-4</id>
        <name>4</name>
        <name>MDK1-T1</name>
        <name>EPHA7-T1</name>
        <sequence type="described" ref="VSP_003008 VSP_003009"/>
    </isoform>
    <isoform>
        <id>Q61772-5</id>
        <name>5</name>
        <name>MDK1-T2</name>
        <name>EPHA7-T2</name>
        <sequence type="described" ref="VSP_003010 VSP_003011"/>
    </isoform>
</comment>
<comment type="tissue specificity">
    <text evidence="12">Widely expressed in embryo. In adult, expression restricted to hippocampus, testis and spleen. Expressed in myogenic progenitor cells (PubMed:27446912).</text>
</comment>
<comment type="developmental stage">
    <text evidence="8 10 12">During visual system development, expressed in an anterior to posterior decreasing gradient stretching through the entire midbrain. This gradient has the reverse orientation to the one defined by the expression of ephrins. Isoform 4 and isoform 5 are expressed at the edges of the embryonic cranial neural fold. In myogenic progenitor cells, highly expressed, at least as early as 11.5 dpc, expression decreases until 4 weeks after birth (PubMed:27446912).</text>
</comment>
<comment type="PTM">
    <text evidence="8">Phosphorylated. Isoform 4 inhibits isoform 1 phosphorylation and may regulate its function in adhesion.</text>
</comment>
<comment type="disruption phenotype">
    <text evidence="9 10">Mice are viable, fertile and show no gross morphological or behavioral defects. However, topographic targeting errors of nasal and temporal retinal axons appear during development of the retinocollicular projections in the visual system. 10 percent of the embryos also display exencephalic overgrowth of forebrain tissues which might be the result of reduced apoptosis.</text>
</comment>
<comment type="miscellaneous">
    <molecule>Isoform 4</molecule>
    <text evidence="15">Truncated receptor lacking the kinase domain.</text>
</comment>
<comment type="miscellaneous">
    <molecule>Isoform 5</molecule>
    <text evidence="15">Truncated receptor lacking the kinase domain.</text>
</comment>
<comment type="similarity">
    <text evidence="3">Belongs to the protein kinase superfamily. Tyr protein kinase family. Ephrin receptor subfamily.</text>
</comment>
<accession>Q61772</accession>
<accession>Q61505</accession>
<accession>Q61773</accession>
<accession>Q61774</accession>
<accession>Q8BSU8</accession>
<evidence type="ECO:0000250" key="1"/>
<evidence type="ECO:0000255" key="2"/>
<evidence type="ECO:0000255" key="3">
    <source>
        <dbReference type="PROSITE-ProRule" id="PRU00159"/>
    </source>
</evidence>
<evidence type="ECO:0000255" key="4">
    <source>
        <dbReference type="PROSITE-ProRule" id="PRU00184"/>
    </source>
</evidence>
<evidence type="ECO:0000255" key="5">
    <source>
        <dbReference type="PROSITE-ProRule" id="PRU00316"/>
    </source>
</evidence>
<evidence type="ECO:0000255" key="6">
    <source>
        <dbReference type="PROSITE-ProRule" id="PRU00883"/>
    </source>
</evidence>
<evidence type="ECO:0000255" key="7">
    <source>
        <dbReference type="PROSITE-ProRule" id="PRU10028"/>
    </source>
</evidence>
<evidence type="ECO:0000269" key="8">
    <source>
    </source>
</evidence>
<evidence type="ECO:0000269" key="9">
    <source>
    </source>
</evidence>
<evidence type="ECO:0000269" key="10">
    <source>
    </source>
</evidence>
<evidence type="ECO:0000269" key="11">
    <source>
    </source>
</evidence>
<evidence type="ECO:0000269" key="12">
    <source>
    </source>
</evidence>
<evidence type="ECO:0000269" key="13">
    <source>
    </source>
</evidence>
<evidence type="ECO:0000303" key="14">
    <source>
    </source>
</evidence>
<evidence type="ECO:0000305" key="15"/>
<evidence type="ECO:0000305" key="16">
    <source>
    </source>
</evidence>
<proteinExistence type="evidence at protein level"/>
<reference key="1">
    <citation type="journal article" date="1995" name="Oncogene">
        <title>Identification of alternatively spliced mRNAs encoding variants of MDK1, a novel receptor tyrosine kinase expressed in the murine nervous system.</title>
        <authorList>
            <person name="Ciossek T."/>
            <person name="Millauer B."/>
            <person name="Ullrich A."/>
        </authorList>
    </citation>
    <scope>NUCLEOTIDE SEQUENCE [MRNA]</scope>
    <scope>ALTERNATIVE SPLICING</scope>
    <source>
        <strain>BALB/cJ</strain>
        <tissue>Brain</tissue>
    </source>
</reference>
<reference key="2">
    <citation type="journal article" date="1997" name="Cell Struct. Funct.">
        <title>A novel truncated variant form of Ebk/MDK1 receptor tyrosine kinase is expressed in embryonic mouse brain.</title>
        <authorList>
            <person name="Talukder A.H."/>
            <person name="Muramatsu T."/>
            <person name="Kaneda N."/>
        </authorList>
    </citation>
    <scope>NUCLEOTIDE SEQUENCE [MRNA] (ISOFORM 2)</scope>
</reference>
<reference key="3">
    <citation type="journal article" date="2005" name="Science">
        <title>The transcriptional landscape of the mammalian genome.</title>
        <authorList>
            <person name="Carninci P."/>
            <person name="Kasukawa T."/>
            <person name="Katayama S."/>
            <person name="Gough J."/>
            <person name="Frith M.C."/>
            <person name="Maeda N."/>
            <person name="Oyama R."/>
            <person name="Ravasi T."/>
            <person name="Lenhard B."/>
            <person name="Wells C."/>
            <person name="Kodzius R."/>
            <person name="Shimokawa K."/>
            <person name="Bajic V.B."/>
            <person name="Brenner S.E."/>
            <person name="Batalov S."/>
            <person name="Forrest A.R."/>
            <person name="Zavolan M."/>
            <person name="Davis M.J."/>
            <person name="Wilming L.G."/>
            <person name="Aidinis V."/>
            <person name="Allen J.E."/>
            <person name="Ambesi-Impiombato A."/>
            <person name="Apweiler R."/>
            <person name="Aturaliya R.N."/>
            <person name="Bailey T.L."/>
            <person name="Bansal M."/>
            <person name="Baxter L."/>
            <person name="Beisel K.W."/>
            <person name="Bersano T."/>
            <person name="Bono H."/>
            <person name="Chalk A.M."/>
            <person name="Chiu K.P."/>
            <person name="Choudhary V."/>
            <person name="Christoffels A."/>
            <person name="Clutterbuck D.R."/>
            <person name="Crowe M.L."/>
            <person name="Dalla E."/>
            <person name="Dalrymple B.P."/>
            <person name="de Bono B."/>
            <person name="Della Gatta G."/>
            <person name="di Bernardo D."/>
            <person name="Down T."/>
            <person name="Engstrom P."/>
            <person name="Fagiolini M."/>
            <person name="Faulkner G."/>
            <person name="Fletcher C.F."/>
            <person name="Fukushima T."/>
            <person name="Furuno M."/>
            <person name="Futaki S."/>
            <person name="Gariboldi M."/>
            <person name="Georgii-Hemming P."/>
            <person name="Gingeras T.R."/>
            <person name="Gojobori T."/>
            <person name="Green R.E."/>
            <person name="Gustincich S."/>
            <person name="Harbers M."/>
            <person name="Hayashi Y."/>
            <person name="Hensch T.K."/>
            <person name="Hirokawa N."/>
            <person name="Hill D."/>
            <person name="Huminiecki L."/>
            <person name="Iacono M."/>
            <person name="Ikeo K."/>
            <person name="Iwama A."/>
            <person name="Ishikawa T."/>
            <person name="Jakt M."/>
            <person name="Kanapin A."/>
            <person name="Katoh M."/>
            <person name="Kawasawa Y."/>
            <person name="Kelso J."/>
            <person name="Kitamura H."/>
            <person name="Kitano H."/>
            <person name="Kollias G."/>
            <person name="Krishnan S.P."/>
            <person name="Kruger A."/>
            <person name="Kummerfeld S.K."/>
            <person name="Kurochkin I.V."/>
            <person name="Lareau L.F."/>
            <person name="Lazarevic D."/>
            <person name="Lipovich L."/>
            <person name="Liu J."/>
            <person name="Liuni S."/>
            <person name="McWilliam S."/>
            <person name="Madan Babu M."/>
            <person name="Madera M."/>
            <person name="Marchionni L."/>
            <person name="Matsuda H."/>
            <person name="Matsuzawa S."/>
            <person name="Miki H."/>
            <person name="Mignone F."/>
            <person name="Miyake S."/>
            <person name="Morris K."/>
            <person name="Mottagui-Tabar S."/>
            <person name="Mulder N."/>
            <person name="Nakano N."/>
            <person name="Nakauchi H."/>
            <person name="Ng P."/>
            <person name="Nilsson R."/>
            <person name="Nishiguchi S."/>
            <person name="Nishikawa S."/>
            <person name="Nori F."/>
            <person name="Ohara O."/>
            <person name="Okazaki Y."/>
            <person name="Orlando V."/>
            <person name="Pang K.C."/>
            <person name="Pavan W.J."/>
            <person name="Pavesi G."/>
            <person name="Pesole G."/>
            <person name="Petrovsky N."/>
            <person name="Piazza S."/>
            <person name="Reed J."/>
            <person name="Reid J.F."/>
            <person name="Ring B.Z."/>
            <person name="Ringwald M."/>
            <person name="Rost B."/>
            <person name="Ruan Y."/>
            <person name="Salzberg S.L."/>
            <person name="Sandelin A."/>
            <person name="Schneider C."/>
            <person name="Schoenbach C."/>
            <person name="Sekiguchi K."/>
            <person name="Semple C.A."/>
            <person name="Seno S."/>
            <person name="Sessa L."/>
            <person name="Sheng Y."/>
            <person name="Shibata Y."/>
            <person name="Shimada H."/>
            <person name="Shimada K."/>
            <person name="Silva D."/>
            <person name="Sinclair B."/>
            <person name="Sperling S."/>
            <person name="Stupka E."/>
            <person name="Sugiura K."/>
            <person name="Sultana R."/>
            <person name="Takenaka Y."/>
            <person name="Taki K."/>
            <person name="Tammoja K."/>
            <person name="Tan S.L."/>
            <person name="Tang S."/>
            <person name="Taylor M.S."/>
            <person name="Tegner J."/>
            <person name="Teichmann S.A."/>
            <person name="Ueda H.R."/>
            <person name="van Nimwegen E."/>
            <person name="Verardo R."/>
            <person name="Wei C.L."/>
            <person name="Yagi K."/>
            <person name="Yamanishi H."/>
            <person name="Zabarovsky E."/>
            <person name="Zhu S."/>
            <person name="Zimmer A."/>
            <person name="Hide W."/>
            <person name="Bult C."/>
            <person name="Grimmond S.M."/>
            <person name="Teasdale R.D."/>
            <person name="Liu E.T."/>
            <person name="Brusic V."/>
            <person name="Quackenbush J."/>
            <person name="Wahlestedt C."/>
            <person name="Mattick J.S."/>
            <person name="Hume D.A."/>
            <person name="Kai C."/>
            <person name="Sasaki D."/>
            <person name="Tomaru Y."/>
            <person name="Fukuda S."/>
            <person name="Kanamori-Katayama M."/>
            <person name="Suzuki M."/>
            <person name="Aoki J."/>
            <person name="Arakawa T."/>
            <person name="Iida J."/>
            <person name="Imamura K."/>
            <person name="Itoh M."/>
            <person name="Kato T."/>
            <person name="Kawaji H."/>
            <person name="Kawagashira N."/>
            <person name="Kawashima T."/>
            <person name="Kojima M."/>
            <person name="Kondo S."/>
            <person name="Konno H."/>
            <person name="Nakano K."/>
            <person name="Ninomiya N."/>
            <person name="Nishio T."/>
            <person name="Okada M."/>
            <person name="Plessy C."/>
            <person name="Shibata K."/>
            <person name="Shiraki T."/>
            <person name="Suzuki S."/>
            <person name="Tagami M."/>
            <person name="Waki K."/>
            <person name="Watahiki A."/>
            <person name="Okamura-Oho Y."/>
            <person name="Suzuki H."/>
            <person name="Kawai J."/>
            <person name="Hayashizaki Y."/>
        </authorList>
    </citation>
    <scope>NUCLEOTIDE SEQUENCE [LARGE SCALE MRNA]</scope>
    <source>
        <strain>C57BL/6J</strain>
        <tissue>Pituitary</tissue>
    </source>
</reference>
<reference key="4">
    <citation type="journal article" date="2009" name="PLoS Biol.">
        <title>Lineage-specific biology revealed by a finished genome assembly of the mouse.</title>
        <authorList>
            <person name="Church D.M."/>
            <person name="Goodstadt L."/>
            <person name="Hillier L.W."/>
            <person name="Zody M.C."/>
            <person name="Goldstein S."/>
            <person name="She X."/>
            <person name="Bult C.J."/>
            <person name="Agarwala R."/>
            <person name="Cherry J.L."/>
            <person name="DiCuccio M."/>
            <person name="Hlavina W."/>
            <person name="Kapustin Y."/>
            <person name="Meric P."/>
            <person name="Maglott D."/>
            <person name="Birtle Z."/>
            <person name="Marques A.C."/>
            <person name="Graves T."/>
            <person name="Zhou S."/>
            <person name="Teague B."/>
            <person name="Potamousis K."/>
            <person name="Churas C."/>
            <person name="Place M."/>
            <person name="Herschleb J."/>
            <person name="Runnheim R."/>
            <person name="Forrest D."/>
            <person name="Amos-Landgraf J."/>
            <person name="Schwartz D.C."/>
            <person name="Cheng Z."/>
            <person name="Lindblad-Toh K."/>
            <person name="Eichler E.E."/>
            <person name="Ponting C.P."/>
        </authorList>
    </citation>
    <scope>NUCLEOTIDE SEQUENCE [LARGE SCALE GENOMIC DNA]</scope>
    <source>
        <strain>C57BL/6J</strain>
    </source>
</reference>
<reference key="5">
    <citation type="submission" date="2005-07" db="EMBL/GenBank/DDBJ databases">
        <authorList>
            <person name="Mural R.J."/>
            <person name="Adams M.D."/>
            <person name="Myers E.W."/>
            <person name="Smith H.O."/>
            <person name="Venter J.C."/>
        </authorList>
    </citation>
    <scope>NUCLEOTIDE SEQUENCE [LARGE SCALE GENOMIC DNA]</scope>
</reference>
<reference key="6">
    <citation type="journal article" date="1995" name="Mech. Dev.">
        <title>Embryo brain kinase: a novel gene of the eph/elk receptor tyrosine kinase family.</title>
        <authorList>
            <person name="Ellis J."/>
            <person name="Liu Q."/>
            <person name="Breitman M."/>
            <person name="Jenkins N.A."/>
            <person name="Gilbert D.J."/>
            <person name="Copeland N.G."/>
            <person name="Tempest H.V."/>
            <person name="Warren S."/>
            <person name="Muir E."/>
            <person name="Schilling H."/>
            <person name="Fletcher F.A."/>
            <person name="Ziegler S.F."/>
            <person name="Rogers J.H."/>
        </authorList>
    </citation>
    <scope>NUCLEOTIDE SEQUENCE [MRNA] OF 431-998 (ISOFORM 1)</scope>
    <source>
        <tissue>Brain</tissue>
    </source>
</reference>
<reference key="7">
    <citation type="journal article" date="1998" name="Neuron">
        <title>PDZ proteins bind, cluster, and synaptically colocalize with Eph receptors and their ephrin ligands.</title>
        <authorList>
            <person name="Torres R."/>
            <person name="Firestein B.L."/>
            <person name="Dong H."/>
            <person name="Staudinger J."/>
            <person name="Olson E.N."/>
            <person name="Huganir R.L."/>
            <person name="Bredt D.S."/>
            <person name="Gale N.W."/>
            <person name="Yancopoulos G.D."/>
        </authorList>
    </citation>
    <scope>INTERACTION WITH GRIP1 AND PICK1</scope>
    <scope>IDENTIFICATION OF PDZ-BINDING MOTIF</scope>
</reference>
<reference key="8">
    <citation type="journal article" date="2000" name="Nature">
        <title>Regulation of repulsion versus adhesion by different splice forms of an Eph receptor.</title>
        <authorList>
            <person name="Holmberg J."/>
            <person name="Clarke D.L."/>
            <person name="Frisen J."/>
        </authorList>
    </citation>
    <scope>FUNCTION IN CELL ADHESION AND REPULSION (ISOFORMS 1 AND 4)</scope>
    <scope>EFNA5 LIGAND-BINDING</scope>
    <scope>PHOSPHORYLATION</scope>
    <scope>DEVELOPMENTAL STAGE</scope>
    <scope>SUBCELLULAR LOCATION</scope>
</reference>
<reference key="9">
    <citation type="journal article" date="2005" name="Nature">
        <title>Ephrin signalling controls brain size by regulating apoptosis of neural progenitors.</title>
        <authorList>
            <person name="Depaepe V."/>
            <person name="Suarez-Gonzalez N."/>
            <person name="Dufour A."/>
            <person name="Passante L."/>
            <person name="Gorski J.A."/>
            <person name="Jones K.R."/>
            <person name="Ledent C."/>
            <person name="Vanderhaeghen P."/>
        </authorList>
    </citation>
    <scope>DISRUPTION PHENOTYPE</scope>
    <scope>FUNCTION IN APOPTOSIS</scope>
</reference>
<reference key="10">
    <citation type="journal article" date="2005" name="Neuron">
        <title>Opposing gradients of ephrin-As and EphA7 in the superior colliculus are essential for topographic mapping in the mammalian visual system.</title>
        <authorList>
            <person name="Rashid T."/>
            <person name="Upton A.L."/>
            <person name="Blentic A."/>
            <person name="Ciossek T."/>
            <person name="Knoell B."/>
            <person name="Thompson I.D."/>
            <person name="Drescher U."/>
        </authorList>
    </citation>
    <scope>DISRUPTION PHENOTYPE</scope>
    <scope>FUNCTION IN TOPOGRAPHIC MAPPING</scope>
    <scope>DEVELOPMENTAL STAGE</scope>
</reference>
<reference key="11">
    <citation type="journal article" date="2005" name="Neuron">
        <title>Dissociation of corticothalamic and thalamocortical axon targeting by an EphA7-mediated mechanism.</title>
        <authorList>
            <person name="Torii M."/>
            <person name="Levitt P."/>
        </authorList>
    </citation>
    <scope>FUNCTION IN CORTICOTHALAMIC AXON GUIDANCE</scope>
</reference>
<reference key="12">
    <citation type="journal article" date="2016" name="Front. Cell Dev. Biol.">
        <title>Gene expression profiling of muscle stem cells identifies novel regulators of postnatal myogenesis.</title>
        <authorList>
            <person name="Alonso-Martin S."/>
            <person name="Rochat A."/>
            <person name="Mademtzoglou D."/>
            <person name="Morais J."/>
            <person name="de Reynies A."/>
            <person name="Aurade F."/>
            <person name="Chang T.H."/>
            <person name="Zammit P.S."/>
            <person name="Relaix F."/>
        </authorList>
    </citation>
    <scope>DEVELOPMENTAL STAGE</scope>
    <scope>TISSUE SPECIFICITY</scope>
</reference>
<sequence>MVVQTRFPSWIILCYIWLLGFAHTGEAQAAKEVLLLDSKAQQTELEWISSPPSGWEEISGLDENYTPIRTYQVCQVMEPNQNNWLRTNWISKGNAQRIFVELKFTLRDCNSLPGVLGTCKETFNLYYYETDYDTGRNIRENLYVKIDTIAADESFTQGDLGERKMKLNTEVREIGPLSKKGFYLAFQDVGACIALVSVKVYYKKCWSIVENLAVFPDTVTGSEFSSLVEVRGTCVSSAEEEAENSPRMHCSAEGEWLVPIGKCICKAGYQQKGDTCEPCGRRFYKSSSQDLQCSRCPTHSFSDREGSSRCECEDGYYRAPSDPPYVACTRPPSAPQNLIFNINQTTVSLEWSPPADNGGRNDVTYRILCKRCSWEQGECVPCGSNIGYMPQQTGLEDNYVTVMDLLAHANYTFEVEAVNGVSDLSRSQRLFAAVSITTGQAAPSQVSGVMKERVLQRSVQLSWQEPEHPNGVITEYEIKYYEKDQRERTYSTLKTKSTSASINNLKPGTVYVFQIRAVTAAGYGNYSPRLDVATLEEASGKMFEATAVSSEQNPVIIIAVVAVAGTIILVFMVFGFIIGRRHCGYSKADQEGDEELYFHFKFPGTKTYIDPETYEDPNRAVHQFAKELDASCIKIERVIGAGEFGEVCSGRLKLPGKRDVAVAIKTLKVGYTEKQRRDFLCEASIMGQFDHPNVVHLEGVVTRGKPVMIVIEFMENGALDAFLRKHDGQFTVIQLVGMLRGIAAGMRYLADMGYVHRDLAARNILVNSNLVCKVSDFGLSRVIEDDPEAVYTTTGGKIPVRWTAPEAIQYRKFTSASDVWSYGIVMWEVMSYGERPYWDMSNQDVIKAIEEGYRLPAPMDCPAGLHQLMLDCWQKDRAERPKFEQIVGILDKMIRNPSSLKTPLGTCSRPLSPLLDQSTPDFTAFCSVGEWLQAIKMERYKDNFTAAGYNSLESVARMTIDDVMSLGITLVGHQKKIMSSIQTMRAQMLHLHGTGIQV</sequence>
<name>EPHA7_MOUSE</name>
<gene>
    <name type="primary">Epha7</name>
    <name type="synonym">Ebk</name>
    <name type="synonym">Ehk3</name>
    <name type="synonym">Mdk1</name>
</gene>
<organism>
    <name type="scientific">Mus musculus</name>
    <name type="common">Mouse</name>
    <dbReference type="NCBI Taxonomy" id="10090"/>
    <lineage>
        <taxon>Eukaryota</taxon>
        <taxon>Metazoa</taxon>
        <taxon>Chordata</taxon>
        <taxon>Craniata</taxon>
        <taxon>Vertebrata</taxon>
        <taxon>Euteleostomi</taxon>
        <taxon>Mammalia</taxon>
        <taxon>Eutheria</taxon>
        <taxon>Euarchontoglires</taxon>
        <taxon>Glires</taxon>
        <taxon>Rodentia</taxon>
        <taxon>Myomorpha</taxon>
        <taxon>Muroidea</taxon>
        <taxon>Muridae</taxon>
        <taxon>Murinae</taxon>
        <taxon>Mus</taxon>
        <taxon>Mus</taxon>
    </lineage>
</organism>
<dbReference type="EC" id="2.7.10.1"/>
<dbReference type="EMBL" id="X79082">
    <property type="protein sequence ID" value="CAA55687.1"/>
    <property type="molecule type" value="mRNA"/>
</dbReference>
<dbReference type="EMBL" id="X79083">
    <property type="protein sequence ID" value="CAA55688.1"/>
    <property type="molecule type" value="mRNA"/>
</dbReference>
<dbReference type="EMBL" id="X79084">
    <property type="protein sequence ID" value="CAA55689.1"/>
    <property type="molecule type" value="mRNA"/>
</dbReference>
<dbReference type="EMBL" id="AK030480">
    <property type="protein sequence ID" value="BAC26982.1"/>
    <property type="molecule type" value="mRNA"/>
</dbReference>
<dbReference type="EMBL" id="BX000989">
    <property type="status" value="NOT_ANNOTATED_CDS"/>
    <property type="molecule type" value="Genomic_DNA"/>
</dbReference>
<dbReference type="EMBL" id="CH466538">
    <property type="protein sequence ID" value="EDL05518.1"/>
    <property type="molecule type" value="Genomic_DNA"/>
</dbReference>
<dbReference type="EMBL" id="X81466">
    <property type="protein sequence ID" value="CAA57224.1"/>
    <property type="molecule type" value="mRNA"/>
</dbReference>
<dbReference type="CCDS" id="CCDS18013.1">
    <molecule id="Q61772-1"/>
</dbReference>
<dbReference type="CCDS" id="CCDS51132.1">
    <molecule id="Q61772-4"/>
</dbReference>
<dbReference type="CCDS" id="CCDS71353.1">
    <molecule id="Q61772-3"/>
</dbReference>
<dbReference type="PIR" id="I48612">
    <property type="entry name" value="I48612"/>
</dbReference>
<dbReference type="PIR" id="I48614">
    <property type="entry name" value="I48614"/>
</dbReference>
<dbReference type="PIR" id="JC5672">
    <property type="entry name" value="JC5672"/>
</dbReference>
<dbReference type="RefSeq" id="NP_001116361.1">
    <molecule id="Q61772-4"/>
    <property type="nucleotide sequence ID" value="NM_001122889.2"/>
</dbReference>
<dbReference type="RefSeq" id="NP_001277363.1">
    <property type="nucleotide sequence ID" value="NM_001290434.1"/>
</dbReference>
<dbReference type="RefSeq" id="NP_001407842.1">
    <molecule id="Q61772-2"/>
    <property type="nucleotide sequence ID" value="NM_001420913.1"/>
</dbReference>
<dbReference type="RefSeq" id="NP_034271.3">
    <molecule id="Q61772-1"/>
    <property type="nucleotide sequence ID" value="NM_010141.4"/>
</dbReference>
<dbReference type="RefSeq" id="XP_006537669.1">
    <property type="nucleotide sequence ID" value="XM_006537606.3"/>
</dbReference>
<dbReference type="RefSeq" id="XP_006537670.1">
    <molecule id="Q61772-5"/>
    <property type="nucleotide sequence ID" value="XM_006537607.5"/>
</dbReference>
<dbReference type="SMR" id="Q61772"/>
<dbReference type="BioGRID" id="199474">
    <property type="interactions" value="2"/>
</dbReference>
<dbReference type="FunCoup" id="Q61772">
    <property type="interactions" value="687"/>
</dbReference>
<dbReference type="STRING" id="10090.ENSMUSP00000029964"/>
<dbReference type="BindingDB" id="Q61772"/>
<dbReference type="ChEMBL" id="CHEMBL4739689"/>
<dbReference type="GuidetoPHARMACOLOGY" id="1827"/>
<dbReference type="GlyCosmos" id="Q61772">
    <property type="glycosylation" value="2 sites, No reported glycans"/>
</dbReference>
<dbReference type="GlyGen" id="Q61772">
    <property type="glycosylation" value="4 sites, 1 N-linked glycan (1 site)"/>
</dbReference>
<dbReference type="iPTMnet" id="Q61772"/>
<dbReference type="PhosphoSitePlus" id="Q61772"/>
<dbReference type="PaxDb" id="10090-ENSMUSP00000029964"/>
<dbReference type="PeptideAtlas" id="Q61772"/>
<dbReference type="ProteomicsDB" id="275757">
    <molecule id="Q61772-1"/>
</dbReference>
<dbReference type="ProteomicsDB" id="275758">
    <molecule id="Q61772-2"/>
</dbReference>
<dbReference type="ProteomicsDB" id="275759">
    <molecule id="Q61772-3"/>
</dbReference>
<dbReference type="ProteomicsDB" id="275760">
    <molecule id="Q61772-4"/>
</dbReference>
<dbReference type="ProteomicsDB" id="275761">
    <molecule id="Q61772-5"/>
</dbReference>
<dbReference type="Antibodypedia" id="642">
    <property type="antibodies" value="553 antibodies from 37 providers"/>
</dbReference>
<dbReference type="DNASU" id="13841"/>
<dbReference type="Ensembl" id="ENSMUST00000029964.12">
    <molecule id="Q61772-1"/>
    <property type="protein sequence ID" value="ENSMUSP00000029964.6"/>
    <property type="gene ID" value="ENSMUSG00000028289.13"/>
</dbReference>
<dbReference type="Ensembl" id="ENSMUST00000080934.11">
    <molecule id="Q61772-4"/>
    <property type="protein sequence ID" value="ENSMUSP00000079735.5"/>
    <property type="gene ID" value="ENSMUSG00000028289.13"/>
</dbReference>
<dbReference type="Ensembl" id="ENSMUST00000108194.9">
    <molecule id="Q61772-5"/>
    <property type="protein sequence ID" value="ENSMUSP00000103829.3"/>
    <property type="gene ID" value="ENSMUSG00000028289.13"/>
</dbReference>
<dbReference type="GeneID" id="13841"/>
<dbReference type="KEGG" id="mmu:13841"/>
<dbReference type="UCSC" id="uc008sen.3">
    <molecule id="Q61772-1"/>
    <property type="organism name" value="mouse"/>
</dbReference>
<dbReference type="AGR" id="MGI:95276"/>
<dbReference type="CTD" id="2045"/>
<dbReference type="MGI" id="MGI:95276">
    <property type="gene designation" value="Epha7"/>
</dbReference>
<dbReference type="VEuPathDB" id="HostDB:ENSMUSG00000028289"/>
<dbReference type="eggNOG" id="KOG0196">
    <property type="taxonomic scope" value="Eukaryota"/>
</dbReference>
<dbReference type="GeneTree" id="ENSGT00940000160189"/>
<dbReference type="HOGENOM" id="CLU_000288_141_3_1"/>
<dbReference type="InParanoid" id="Q61772"/>
<dbReference type="OMA" id="ETDYNTG"/>
<dbReference type="OrthoDB" id="4062651at2759"/>
<dbReference type="PhylomeDB" id="Q61772"/>
<dbReference type="TreeFam" id="TF315608"/>
<dbReference type="BRENDA" id="2.7.10.1">
    <property type="organism ID" value="3474"/>
</dbReference>
<dbReference type="Reactome" id="R-MMU-2682334">
    <property type="pathway name" value="EPH-Ephrin signaling"/>
</dbReference>
<dbReference type="Reactome" id="R-MMU-3928663">
    <property type="pathway name" value="EPHA-mediated growth cone collapse"/>
</dbReference>
<dbReference type="Reactome" id="R-MMU-3928665">
    <property type="pathway name" value="EPH-ephrin mediated repulsion of cells"/>
</dbReference>
<dbReference type="BioGRID-ORCS" id="13841">
    <property type="hits" value="3 hits in 79 CRISPR screens"/>
</dbReference>
<dbReference type="ChiTaRS" id="Epha7">
    <property type="organism name" value="mouse"/>
</dbReference>
<dbReference type="PRO" id="PR:Q61772"/>
<dbReference type="Proteomes" id="UP000000589">
    <property type="component" value="Chromosome 4"/>
</dbReference>
<dbReference type="RNAct" id="Q61772">
    <property type="molecule type" value="protein"/>
</dbReference>
<dbReference type="Bgee" id="ENSMUSG00000028289">
    <property type="expression patterns" value="Expressed in vestibular membrane of cochlear duct and 304 other cell types or tissues"/>
</dbReference>
<dbReference type="ExpressionAtlas" id="Q61772">
    <property type="expression patterns" value="baseline and differential"/>
</dbReference>
<dbReference type="GO" id="GO:0030425">
    <property type="term" value="C:dendrite"/>
    <property type="evidence" value="ECO:0007669"/>
    <property type="project" value="Ensembl"/>
</dbReference>
<dbReference type="GO" id="GO:0098978">
    <property type="term" value="C:glutamatergic synapse"/>
    <property type="evidence" value="ECO:0000314"/>
    <property type="project" value="SynGO"/>
</dbReference>
<dbReference type="GO" id="GO:0098686">
    <property type="term" value="C:hippocampal mossy fiber to CA3 synapse"/>
    <property type="evidence" value="ECO:0007669"/>
    <property type="project" value="Ensembl"/>
</dbReference>
<dbReference type="GO" id="GO:0031594">
    <property type="term" value="C:neuromuscular junction"/>
    <property type="evidence" value="ECO:0007669"/>
    <property type="project" value="Ensembl"/>
</dbReference>
<dbReference type="GO" id="GO:0043025">
    <property type="term" value="C:neuronal cell body"/>
    <property type="evidence" value="ECO:0007669"/>
    <property type="project" value="Ensembl"/>
</dbReference>
<dbReference type="GO" id="GO:0005886">
    <property type="term" value="C:plasma membrane"/>
    <property type="evidence" value="ECO:0000305"/>
    <property type="project" value="UniProtKB"/>
</dbReference>
<dbReference type="GO" id="GO:0098839">
    <property type="term" value="C:postsynaptic density membrane"/>
    <property type="evidence" value="ECO:0007669"/>
    <property type="project" value="Ensembl"/>
</dbReference>
<dbReference type="GO" id="GO:0098685">
    <property type="term" value="C:Schaffer collateral - CA1 synapse"/>
    <property type="evidence" value="ECO:0007669"/>
    <property type="project" value="Ensembl"/>
</dbReference>
<dbReference type="GO" id="GO:0005524">
    <property type="term" value="F:ATP binding"/>
    <property type="evidence" value="ECO:0007669"/>
    <property type="project" value="UniProtKB-KW"/>
</dbReference>
<dbReference type="GO" id="GO:0008046">
    <property type="term" value="F:axon guidance receptor activity"/>
    <property type="evidence" value="ECO:0000315"/>
    <property type="project" value="UniProtKB"/>
</dbReference>
<dbReference type="GO" id="GO:0045499">
    <property type="term" value="F:chemorepellent activity"/>
    <property type="evidence" value="ECO:0000314"/>
    <property type="project" value="MGI"/>
</dbReference>
<dbReference type="GO" id="GO:0046875">
    <property type="term" value="F:ephrin receptor binding"/>
    <property type="evidence" value="ECO:0007669"/>
    <property type="project" value="Ensembl"/>
</dbReference>
<dbReference type="GO" id="GO:0005004">
    <property type="term" value="F:GPI-linked ephrin receptor activity"/>
    <property type="evidence" value="ECO:0000314"/>
    <property type="project" value="UniProtKB"/>
</dbReference>
<dbReference type="GO" id="GO:0019838">
    <property type="term" value="F:growth factor binding"/>
    <property type="evidence" value="ECO:0000353"/>
    <property type="project" value="ARUK-UCL"/>
</dbReference>
<dbReference type="GO" id="GO:0007420">
    <property type="term" value="P:brain development"/>
    <property type="evidence" value="ECO:0000315"/>
    <property type="project" value="UniProtKB"/>
</dbReference>
<dbReference type="GO" id="GO:0048755">
    <property type="term" value="P:branching morphogenesis of a nerve"/>
    <property type="evidence" value="ECO:0000315"/>
    <property type="project" value="MGI"/>
</dbReference>
<dbReference type="GO" id="GO:0048013">
    <property type="term" value="P:ephrin receptor signaling pathway"/>
    <property type="evidence" value="ECO:0000314"/>
    <property type="project" value="UniProtKB"/>
</dbReference>
<dbReference type="GO" id="GO:0050804">
    <property type="term" value="P:modulation of chemical synaptic transmission"/>
    <property type="evidence" value="ECO:0000314"/>
    <property type="project" value="SynGO"/>
</dbReference>
<dbReference type="GO" id="GO:0048671">
    <property type="term" value="P:negative regulation of collateral sprouting"/>
    <property type="evidence" value="ECO:0000314"/>
    <property type="project" value="BHF-UCL"/>
</dbReference>
<dbReference type="GO" id="GO:0051898">
    <property type="term" value="P:negative regulation of phosphatidylinositol 3-kinase/protein kinase B signal transduction"/>
    <property type="evidence" value="ECO:0000314"/>
    <property type="project" value="BHF-UCL"/>
</dbReference>
<dbReference type="GO" id="GO:0051964">
    <property type="term" value="P:negative regulation of synapse assembly"/>
    <property type="evidence" value="ECO:0000314"/>
    <property type="project" value="BHF-UCL"/>
</dbReference>
<dbReference type="GO" id="GO:0072178">
    <property type="term" value="P:nephric duct morphogenesis"/>
    <property type="evidence" value="ECO:0000316"/>
    <property type="project" value="MGI"/>
</dbReference>
<dbReference type="GO" id="GO:0051402">
    <property type="term" value="P:neuron apoptotic process"/>
    <property type="evidence" value="ECO:0000315"/>
    <property type="project" value="MGI"/>
</dbReference>
<dbReference type="GO" id="GO:0016310">
    <property type="term" value="P:phosphorylation"/>
    <property type="evidence" value="ECO:0000250"/>
    <property type="project" value="UniProtKB"/>
</dbReference>
<dbReference type="GO" id="GO:0043525">
    <property type="term" value="P:positive regulation of neuron apoptotic process"/>
    <property type="evidence" value="ECO:0000315"/>
    <property type="project" value="MGI"/>
</dbReference>
<dbReference type="GO" id="GO:0022407">
    <property type="term" value="P:regulation of cell-cell adhesion"/>
    <property type="evidence" value="ECO:0000314"/>
    <property type="project" value="UniProtKB"/>
</dbReference>
<dbReference type="GO" id="GO:0070372">
    <property type="term" value="P:regulation of ERK1 and ERK2 cascade"/>
    <property type="evidence" value="ECO:0000250"/>
    <property type="project" value="UniProtKB"/>
</dbReference>
<dbReference type="GO" id="GO:0050730">
    <property type="term" value="P:regulation of peptidyl-tyrosine phosphorylation"/>
    <property type="evidence" value="ECO:0000314"/>
    <property type="project" value="UniProtKB"/>
</dbReference>
<dbReference type="GO" id="GO:0099175">
    <property type="term" value="P:regulation of postsynapse organization"/>
    <property type="evidence" value="ECO:0000314"/>
    <property type="project" value="SynGO"/>
</dbReference>
<dbReference type="GO" id="GO:0031952">
    <property type="term" value="P:regulation of protein autophosphorylation"/>
    <property type="evidence" value="ECO:0000314"/>
    <property type="project" value="UniProtKB"/>
</dbReference>
<dbReference type="GO" id="GO:0031290">
    <property type="term" value="P:retinal ganglion cell axon guidance"/>
    <property type="evidence" value="ECO:0000315"/>
    <property type="project" value="MGI"/>
</dbReference>
<dbReference type="CDD" id="cd10485">
    <property type="entry name" value="EphR_LBD_A7"/>
    <property type="match status" value="1"/>
</dbReference>
<dbReference type="CDD" id="cd00063">
    <property type="entry name" value="FN3"/>
    <property type="match status" value="2"/>
</dbReference>
<dbReference type="CDD" id="cd05066">
    <property type="entry name" value="PTKc_EphR_A"/>
    <property type="match status" value="1"/>
</dbReference>
<dbReference type="CDD" id="cd09548">
    <property type="entry name" value="SAM_EPH-A7"/>
    <property type="match status" value="1"/>
</dbReference>
<dbReference type="FunFam" id="1.10.150.50:FF:000001">
    <property type="entry name" value="Ephrin type-A receptor 5"/>
    <property type="match status" value="1"/>
</dbReference>
<dbReference type="FunFam" id="2.10.50.10:FF:000001">
    <property type="entry name" value="Ephrin type-A receptor 5"/>
    <property type="match status" value="1"/>
</dbReference>
<dbReference type="FunFam" id="2.60.40.10:FF:000045">
    <property type="entry name" value="Ephrin type-A receptor 5"/>
    <property type="match status" value="1"/>
</dbReference>
<dbReference type="FunFam" id="2.60.40.1770:FF:000001">
    <property type="entry name" value="Ephrin type-A receptor 5"/>
    <property type="match status" value="1"/>
</dbReference>
<dbReference type="FunFam" id="3.30.200.20:FF:000001">
    <property type="entry name" value="Ephrin type-A receptor 5"/>
    <property type="match status" value="1"/>
</dbReference>
<dbReference type="FunFam" id="1.10.510.10:FF:000130">
    <property type="entry name" value="Ephrin type-A receptor 7"/>
    <property type="match status" value="1"/>
</dbReference>
<dbReference type="FunFam" id="2.60.120.260:FF:000001">
    <property type="entry name" value="Ephrin type-A receptor 7"/>
    <property type="match status" value="1"/>
</dbReference>
<dbReference type="FunFam" id="2.60.40.10:FF:000190">
    <property type="entry name" value="Ephrin type-A receptor 7"/>
    <property type="match status" value="1"/>
</dbReference>
<dbReference type="Gene3D" id="2.60.40.1770">
    <property type="entry name" value="ephrin a2 ectodomain"/>
    <property type="match status" value="1"/>
</dbReference>
<dbReference type="Gene3D" id="2.60.120.260">
    <property type="entry name" value="Galactose-binding domain-like"/>
    <property type="match status" value="1"/>
</dbReference>
<dbReference type="Gene3D" id="2.60.40.10">
    <property type="entry name" value="Immunoglobulins"/>
    <property type="match status" value="2"/>
</dbReference>
<dbReference type="Gene3D" id="3.30.200.20">
    <property type="entry name" value="Phosphorylase Kinase, domain 1"/>
    <property type="match status" value="1"/>
</dbReference>
<dbReference type="Gene3D" id="1.10.150.50">
    <property type="entry name" value="Transcription Factor, Ets-1"/>
    <property type="match status" value="1"/>
</dbReference>
<dbReference type="Gene3D" id="1.10.510.10">
    <property type="entry name" value="Transferase(Phosphotransferase) domain 1"/>
    <property type="match status" value="1"/>
</dbReference>
<dbReference type="Gene3D" id="2.10.50.10">
    <property type="entry name" value="Tumor Necrosis Factor Receptor, subunit A, domain 2"/>
    <property type="match status" value="1"/>
</dbReference>
<dbReference type="InterPro" id="IPR027936">
    <property type="entry name" value="Eph_TM"/>
</dbReference>
<dbReference type="InterPro" id="IPR034283">
    <property type="entry name" value="EphA7_rcpt_lig-bd"/>
</dbReference>
<dbReference type="InterPro" id="IPR001090">
    <property type="entry name" value="Ephrin_rcpt_lig-bd_dom"/>
</dbReference>
<dbReference type="InterPro" id="IPR050449">
    <property type="entry name" value="Ephrin_rcpt_TKs"/>
</dbReference>
<dbReference type="InterPro" id="IPR003961">
    <property type="entry name" value="FN3_dom"/>
</dbReference>
<dbReference type="InterPro" id="IPR036116">
    <property type="entry name" value="FN3_sf"/>
</dbReference>
<dbReference type="InterPro" id="IPR008979">
    <property type="entry name" value="Galactose-bd-like_sf"/>
</dbReference>
<dbReference type="InterPro" id="IPR009030">
    <property type="entry name" value="Growth_fac_rcpt_cys_sf"/>
</dbReference>
<dbReference type="InterPro" id="IPR013783">
    <property type="entry name" value="Ig-like_fold"/>
</dbReference>
<dbReference type="InterPro" id="IPR011009">
    <property type="entry name" value="Kinase-like_dom_sf"/>
</dbReference>
<dbReference type="InterPro" id="IPR000719">
    <property type="entry name" value="Prot_kinase_dom"/>
</dbReference>
<dbReference type="InterPro" id="IPR017441">
    <property type="entry name" value="Protein_kinase_ATP_BS"/>
</dbReference>
<dbReference type="InterPro" id="IPR001660">
    <property type="entry name" value="SAM"/>
</dbReference>
<dbReference type="InterPro" id="IPR013761">
    <property type="entry name" value="SAM/pointed_sf"/>
</dbReference>
<dbReference type="InterPro" id="IPR001245">
    <property type="entry name" value="Ser-Thr/Tyr_kinase_cat_dom"/>
</dbReference>
<dbReference type="InterPro" id="IPR008266">
    <property type="entry name" value="Tyr_kinase_AS"/>
</dbReference>
<dbReference type="InterPro" id="IPR020635">
    <property type="entry name" value="Tyr_kinase_cat_dom"/>
</dbReference>
<dbReference type="InterPro" id="IPR016257">
    <property type="entry name" value="Tyr_kinase_ephrin_rcpt"/>
</dbReference>
<dbReference type="InterPro" id="IPR001426">
    <property type="entry name" value="Tyr_kinase_rcpt_V_CS"/>
</dbReference>
<dbReference type="PANTHER" id="PTHR46877">
    <property type="entry name" value="EPH RECEPTOR A5"/>
    <property type="match status" value="1"/>
</dbReference>
<dbReference type="PANTHER" id="PTHR46877:SF9">
    <property type="entry name" value="EPHRIN TYPE-A RECEPTOR 7"/>
    <property type="match status" value="1"/>
</dbReference>
<dbReference type="Pfam" id="PF14575">
    <property type="entry name" value="EphA2_TM"/>
    <property type="match status" value="1"/>
</dbReference>
<dbReference type="Pfam" id="PF01404">
    <property type="entry name" value="Ephrin_lbd"/>
    <property type="match status" value="1"/>
</dbReference>
<dbReference type="Pfam" id="PF00041">
    <property type="entry name" value="fn3"/>
    <property type="match status" value="2"/>
</dbReference>
<dbReference type="Pfam" id="PF07714">
    <property type="entry name" value="PK_Tyr_Ser-Thr"/>
    <property type="match status" value="1"/>
</dbReference>
<dbReference type="Pfam" id="PF00536">
    <property type="entry name" value="SAM_1"/>
    <property type="match status" value="1"/>
</dbReference>
<dbReference type="PIRSF" id="PIRSF000666">
    <property type="entry name" value="TyrPK_ephrin_receptor"/>
    <property type="match status" value="1"/>
</dbReference>
<dbReference type="PRINTS" id="PR00014">
    <property type="entry name" value="FNTYPEIII"/>
</dbReference>
<dbReference type="PRINTS" id="PR00109">
    <property type="entry name" value="TYRKINASE"/>
</dbReference>
<dbReference type="SMART" id="SM00615">
    <property type="entry name" value="EPH_lbd"/>
    <property type="match status" value="1"/>
</dbReference>
<dbReference type="SMART" id="SM01411">
    <property type="entry name" value="Ephrin_rec_like"/>
    <property type="match status" value="1"/>
</dbReference>
<dbReference type="SMART" id="SM00060">
    <property type="entry name" value="FN3"/>
    <property type="match status" value="2"/>
</dbReference>
<dbReference type="SMART" id="SM00454">
    <property type="entry name" value="SAM"/>
    <property type="match status" value="1"/>
</dbReference>
<dbReference type="SMART" id="SM00219">
    <property type="entry name" value="TyrKc"/>
    <property type="match status" value="1"/>
</dbReference>
<dbReference type="SUPFAM" id="SSF49265">
    <property type="entry name" value="Fibronectin type III"/>
    <property type="match status" value="1"/>
</dbReference>
<dbReference type="SUPFAM" id="SSF49785">
    <property type="entry name" value="Galactose-binding domain-like"/>
    <property type="match status" value="1"/>
</dbReference>
<dbReference type="SUPFAM" id="SSF57184">
    <property type="entry name" value="Growth factor receptor domain"/>
    <property type="match status" value="1"/>
</dbReference>
<dbReference type="SUPFAM" id="SSF56112">
    <property type="entry name" value="Protein kinase-like (PK-like)"/>
    <property type="match status" value="1"/>
</dbReference>
<dbReference type="SUPFAM" id="SSF47769">
    <property type="entry name" value="SAM/Pointed domain"/>
    <property type="match status" value="1"/>
</dbReference>
<dbReference type="PROSITE" id="PS01186">
    <property type="entry name" value="EGF_2"/>
    <property type="match status" value="1"/>
</dbReference>
<dbReference type="PROSITE" id="PS51550">
    <property type="entry name" value="EPH_LBD"/>
    <property type="match status" value="1"/>
</dbReference>
<dbReference type="PROSITE" id="PS50853">
    <property type="entry name" value="FN3"/>
    <property type="match status" value="2"/>
</dbReference>
<dbReference type="PROSITE" id="PS00107">
    <property type="entry name" value="PROTEIN_KINASE_ATP"/>
    <property type="match status" value="1"/>
</dbReference>
<dbReference type="PROSITE" id="PS50011">
    <property type="entry name" value="PROTEIN_KINASE_DOM"/>
    <property type="match status" value="1"/>
</dbReference>
<dbReference type="PROSITE" id="PS00109">
    <property type="entry name" value="PROTEIN_KINASE_TYR"/>
    <property type="match status" value="1"/>
</dbReference>
<dbReference type="PROSITE" id="PS00790">
    <property type="entry name" value="RECEPTOR_TYR_KIN_V_1"/>
    <property type="match status" value="1"/>
</dbReference>
<dbReference type="PROSITE" id="PS00791">
    <property type="entry name" value="RECEPTOR_TYR_KIN_V_2"/>
    <property type="match status" value="1"/>
</dbReference>
<dbReference type="PROSITE" id="PS50105">
    <property type="entry name" value="SAM_DOMAIN"/>
    <property type="match status" value="1"/>
</dbReference>